<reference key="1">
    <citation type="journal article" date="2005" name="Science">
        <title>The transcriptional landscape of the mammalian genome.</title>
        <authorList>
            <person name="Carninci P."/>
            <person name="Kasukawa T."/>
            <person name="Katayama S."/>
            <person name="Gough J."/>
            <person name="Frith M.C."/>
            <person name="Maeda N."/>
            <person name="Oyama R."/>
            <person name="Ravasi T."/>
            <person name="Lenhard B."/>
            <person name="Wells C."/>
            <person name="Kodzius R."/>
            <person name="Shimokawa K."/>
            <person name="Bajic V.B."/>
            <person name="Brenner S.E."/>
            <person name="Batalov S."/>
            <person name="Forrest A.R."/>
            <person name="Zavolan M."/>
            <person name="Davis M.J."/>
            <person name="Wilming L.G."/>
            <person name="Aidinis V."/>
            <person name="Allen J.E."/>
            <person name="Ambesi-Impiombato A."/>
            <person name="Apweiler R."/>
            <person name="Aturaliya R.N."/>
            <person name="Bailey T.L."/>
            <person name="Bansal M."/>
            <person name="Baxter L."/>
            <person name="Beisel K.W."/>
            <person name="Bersano T."/>
            <person name="Bono H."/>
            <person name="Chalk A.M."/>
            <person name="Chiu K.P."/>
            <person name="Choudhary V."/>
            <person name="Christoffels A."/>
            <person name="Clutterbuck D.R."/>
            <person name="Crowe M.L."/>
            <person name="Dalla E."/>
            <person name="Dalrymple B.P."/>
            <person name="de Bono B."/>
            <person name="Della Gatta G."/>
            <person name="di Bernardo D."/>
            <person name="Down T."/>
            <person name="Engstrom P."/>
            <person name="Fagiolini M."/>
            <person name="Faulkner G."/>
            <person name="Fletcher C.F."/>
            <person name="Fukushima T."/>
            <person name="Furuno M."/>
            <person name="Futaki S."/>
            <person name="Gariboldi M."/>
            <person name="Georgii-Hemming P."/>
            <person name="Gingeras T.R."/>
            <person name="Gojobori T."/>
            <person name="Green R.E."/>
            <person name="Gustincich S."/>
            <person name="Harbers M."/>
            <person name="Hayashi Y."/>
            <person name="Hensch T.K."/>
            <person name="Hirokawa N."/>
            <person name="Hill D."/>
            <person name="Huminiecki L."/>
            <person name="Iacono M."/>
            <person name="Ikeo K."/>
            <person name="Iwama A."/>
            <person name="Ishikawa T."/>
            <person name="Jakt M."/>
            <person name="Kanapin A."/>
            <person name="Katoh M."/>
            <person name="Kawasawa Y."/>
            <person name="Kelso J."/>
            <person name="Kitamura H."/>
            <person name="Kitano H."/>
            <person name="Kollias G."/>
            <person name="Krishnan S.P."/>
            <person name="Kruger A."/>
            <person name="Kummerfeld S.K."/>
            <person name="Kurochkin I.V."/>
            <person name="Lareau L.F."/>
            <person name="Lazarevic D."/>
            <person name="Lipovich L."/>
            <person name="Liu J."/>
            <person name="Liuni S."/>
            <person name="McWilliam S."/>
            <person name="Madan Babu M."/>
            <person name="Madera M."/>
            <person name="Marchionni L."/>
            <person name="Matsuda H."/>
            <person name="Matsuzawa S."/>
            <person name="Miki H."/>
            <person name="Mignone F."/>
            <person name="Miyake S."/>
            <person name="Morris K."/>
            <person name="Mottagui-Tabar S."/>
            <person name="Mulder N."/>
            <person name="Nakano N."/>
            <person name="Nakauchi H."/>
            <person name="Ng P."/>
            <person name="Nilsson R."/>
            <person name="Nishiguchi S."/>
            <person name="Nishikawa S."/>
            <person name="Nori F."/>
            <person name="Ohara O."/>
            <person name="Okazaki Y."/>
            <person name="Orlando V."/>
            <person name="Pang K.C."/>
            <person name="Pavan W.J."/>
            <person name="Pavesi G."/>
            <person name="Pesole G."/>
            <person name="Petrovsky N."/>
            <person name="Piazza S."/>
            <person name="Reed J."/>
            <person name="Reid J.F."/>
            <person name="Ring B.Z."/>
            <person name="Ringwald M."/>
            <person name="Rost B."/>
            <person name="Ruan Y."/>
            <person name="Salzberg S.L."/>
            <person name="Sandelin A."/>
            <person name="Schneider C."/>
            <person name="Schoenbach C."/>
            <person name="Sekiguchi K."/>
            <person name="Semple C.A."/>
            <person name="Seno S."/>
            <person name="Sessa L."/>
            <person name="Sheng Y."/>
            <person name="Shibata Y."/>
            <person name="Shimada H."/>
            <person name="Shimada K."/>
            <person name="Silva D."/>
            <person name="Sinclair B."/>
            <person name="Sperling S."/>
            <person name="Stupka E."/>
            <person name="Sugiura K."/>
            <person name="Sultana R."/>
            <person name="Takenaka Y."/>
            <person name="Taki K."/>
            <person name="Tammoja K."/>
            <person name="Tan S.L."/>
            <person name="Tang S."/>
            <person name="Taylor M.S."/>
            <person name="Tegner J."/>
            <person name="Teichmann S.A."/>
            <person name="Ueda H.R."/>
            <person name="van Nimwegen E."/>
            <person name="Verardo R."/>
            <person name="Wei C.L."/>
            <person name="Yagi K."/>
            <person name="Yamanishi H."/>
            <person name="Zabarovsky E."/>
            <person name="Zhu S."/>
            <person name="Zimmer A."/>
            <person name="Hide W."/>
            <person name="Bult C."/>
            <person name="Grimmond S.M."/>
            <person name="Teasdale R.D."/>
            <person name="Liu E.T."/>
            <person name="Brusic V."/>
            <person name="Quackenbush J."/>
            <person name="Wahlestedt C."/>
            <person name="Mattick J.S."/>
            <person name="Hume D.A."/>
            <person name="Kai C."/>
            <person name="Sasaki D."/>
            <person name="Tomaru Y."/>
            <person name="Fukuda S."/>
            <person name="Kanamori-Katayama M."/>
            <person name="Suzuki M."/>
            <person name="Aoki J."/>
            <person name="Arakawa T."/>
            <person name="Iida J."/>
            <person name="Imamura K."/>
            <person name="Itoh M."/>
            <person name="Kato T."/>
            <person name="Kawaji H."/>
            <person name="Kawagashira N."/>
            <person name="Kawashima T."/>
            <person name="Kojima M."/>
            <person name="Kondo S."/>
            <person name="Konno H."/>
            <person name="Nakano K."/>
            <person name="Ninomiya N."/>
            <person name="Nishio T."/>
            <person name="Okada M."/>
            <person name="Plessy C."/>
            <person name="Shibata K."/>
            <person name="Shiraki T."/>
            <person name="Suzuki S."/>
            <person name="Tagami M."/>
            <person name="Waki K."/>
            <person name="Watahiki A."/>
            <person name="Okamura-Oho Y."/>
            <person name="Suzuki H."/>
            <person name="Kawai J."/>
            <person name="Hayashizaki Y."/>
        </authorList>
    </citation>
    <scope>NUCLEOTIDE SEQUENCE [LARGE SCALE MRNA]</scope>
    <source>
        <strain>C57BL/6J</strain>
        <tissue>Pancreas</tissue>
        <tissue>Small intestine</tissue>
        <tissue>Tongue</tissue>
    </source>
</reference>
<reference key="2">
    <citation type="journal article" date="2004" name="Genome Res.">
        <title>The status, quality, and expansion of the NIH full-length cDNA project: the Mammalian Gene Collection (MGC).</title>
        <authorList>
            <consortium name="The MGC Project Team"/>
        </authorList>
    </citation>
    <scope>NUCLEOTIDE SEQUENCE [LARGE SCALE MRNA]</scope>
</reference>
<reference key="3">
    <citation type="submission" date="2007-03" db="UniProtKB">
        <authorList>
            <person name="Lubec G."/>
            <person name="Klug S."/>
        </authorList>
    </citation>
    <scope>PROTEIN SEQUENCE OF 19-30</scope>
    <scope>IDENTIFICATION BY MASS SPECTROMETRY</scope>
    <source>
        <tissue>Hippocampus</tissue>
    </source>
</reference>
<reference key="4">
    <citation type="journal article" date="2002" name="Biochem. Biophys. Res. Commun.">
        <title>Molecular cloning and functional characterization of mouse coactosin-like protein.</title>
        <authorList>
            <person name="Doucet J."/>
            <person name="Provost P."/>
            <person name="Samuelsson B."/>
            <person name="Radmark O."/>
        </authorList>
    </citation>
    <scope>FUNCTION</scope>
    <scope>INTERACTION WITH 5-LIPOXYGENASE</scope>
</reference>
<reference key="5">
    <citation type="journal article" date="2010" name="Cell">
        <title>A tissue-specific atlas of mouse protein phosphorylation and expression.</title>
        <authorList>
            <person name="Huttlin E.L."/>
            <person name="Jedrychowski M.P."/>
            <person name="Elias J.E."/>
            <person name="Goswami T."/>
            <person name="Rad R."/>
            <person name="Beausoleil S.A."/>
            <person name="Villen J."/>
            <person name="Haas W."/>
            <person name="Sowa M.E."/>
            <person name="Gygi S.P."/>
        </authorList>
    </citation>
    <scope>IDENTIFICATION BY MASS SPECTROMETRY [LARGE SCALE ANALYSIS]</scope>
    <source>
        <tissue>Brain</tissue>
        <tissue>Brown adipose tissue</tissue>
        <tissue>Heart</tissue>
        <tissue>Kidney</tissue>
        <tissue>Liver</tissue>
        <tissue>Lung</tissue>
        <tissue>Pancreas</tissue>
        <tissue>Spleen</tissue>
        <tissue>Testis</tissue>
    </source>
</reference>
<reference key="6">
    <citation type="submission" date="2004-05" db="PDB data bank">
        <title>Solution structure of coactosin-like protein (cofilin family) from Mus musculus.</title>
        <authorList>
            <consortium name="RIKEN structural genomics initiative (RSGI)"/>
        </authorList>
    </citation>
    <scope>STRUCTURE BY NMR</scope>
</reference>
<feature type="initiator methionine" description="Removed" evidence="3">
    <location>
        <position position="1"/>
    </location>
</feature>
<feature type="chain" id="PRO_0000214955" description="Coactosin-like protein">
    <location>
        <begin position="2"/>
        <end position="142"/>
    </location>
</feature>
<feature type="domain" description="ADF-H" evidence="4">
    <location>
        <begin position="2"/>
        <end position="130"/>
    </location>
</feature>
<feature type="region of interest" description="Flexible and important for F-actin binding" evidence="1">
    <location>
        <begin position="66"/>
        <end position="75"/>
    </location>
</feature>
<feature type="modified residue" description="N-acetylalanine" evidence="3">
    <location>
        <position position="2"/>
    </location>
</feature>
<feature type="modified residue" description="N6-acetyllysine" evidence="3">
    <location>
        <position position="102"/>
    </location>
</feature>
<feature type="modified residue" description="Phosphoserine" evidence="2">
    <location>
        <position position="141"/>
    </location>
</feature>
<feature type="helix" evidence="7">
    <location>
        <begin position="7"/>
        <end position="18"/>
    </location>
</feature>
<feature type="strand" evidence="8">
    <location>
        <begin position="19"/>
        <end position="22"/>
    </location>
</feature>
<feature type="strand" evidence="7">
    <location>
        <begin position="25"/>
        <end position="43"/>
    </location>
</feature>
<feature type="helix" evidence="7">
    <location>
        <begin position="45"/>
        <end position="49"/>
    </location>
</feature>
<feature type="strand" evidence="7">
    <location>
        <begin position="57"/>
        <end position="62"/>
    </location>
</feature>
<feature type="turn" evidence="8">
    <location>
        <begin position="70"/>
        <end position="73"/>
    </location>
</feature>
<feature type="strand" evidence="7">
    <location>
        <begin position="77"/>
        <end position="82"/>
    </location>
</feature>
<feature type="strand" evidence="7">
    <location>
        <begin position="84"/>
        <end position="86"/>
    </location>
</feature>
<feature type="helix" evidence="7">
    <location>
        <begin position="88"/>
        <end position="94"/>
    </location>
</feature>
<feature type="turn" evidence="7">
    <location>
        <begin position="95"/>
        <end position="97"/>
    </location>
</feature>
<feature type="helix" evidence="7">
    <location>
        <begin position="98"/>
        <end position="104"/>
    </location>
</feature>
<feature type="strand" evidence="7">
    <location>
        <begin position="111"/>
        <end position="114"/>
    </location>
</feature>
<feature type="helix" evidence="7">
    <location>
        <begin position="117"/>
        <end position="120"/>
    </location>
</feature>
<feature type="helix" evidence="7">
    <location>
        <begin position="122"/>
        <end position="131"/>
    </location>
</feature>
<feature type="helix" evidence="8">
    <location>
        <begin position="136"/>
        <end position="139"/>
    </location>
</feature>
<sequence length="142" mass="15944">MATKIDKEACRAAYNLVRDDGSAVIWVTFRYDGATIVPGDQGADYQHFIQQCTDDVRLFAFVRFTTGDAMSKRSKFALITWIGEDVSGLQRAKTGTDKTLVKEVVQNFAKEFVISDRKELEEDFIRSELKKAGGANYDAQSE</sequence>
<keyword id="KW-0002">3D-structure</keyword>
<keyword id="KW-0007">Acetylation</keyword>
<keyword id="KW-0009">Actin-binding</keyword>
<keyword id="KW-0143">Chaperone</keyword>
<keyword id="KW-0963">Cytoplasm</keyword>
<keyword id="KW-0206">Cytoskeleton</keyword>
<keyword id="KW-0903">Direct protein sequencing</keyword>
<keyword id="KW-0539">Nucleus</keyword>
<keyword id="KW-0597">Phosphoprotein</keyword>
<keyword id="KW-1185">Reference proteome</keyword>
<proteinExistence type="evidence at protein level"/>
<organism>
    <name type="scientific">Mus musculus</name>
    <name type="common">Mouse</name>
    <dbReference type="NCBI Taxonomy" id="10090"/>
    <lineage>
        <taxon>Eukaryota</taxon>
        <taxon>Metazoa</taxon>
        <taxon>Chordata</taxon>
        <taxon>Craniata</taxon>
        <taxon>Vertebrata</taxon>
        <taxon>Euteleostomi</taxon>
        <taxon>Mammalia</taxon>
        <taxon>Eutheria</taxon>
        <taxon>Euarchontoglires</taxon>
        <taxon>Glires</taxon>
        <taxon>Rodentia</taxon>
        <taxon>Myomorpha</taxon>
        <taxon>Muroidea</taxon>
        <taxon>Muridae</taxon>
        <taxon>Murinae</taxon>
        <taxon>Mus</taxon>
        <taxon>Mus</taxon>
    </lineage>
</organism>
<gene>
    <name type="primary">Cotl1</name>
    <name type="synonym">Clp</name>
</gene>
<accession>Q9CQI6</accession>
<comment type="function">
    <text evidence="1 5">Binds to F-actin in a calcium-independent manner. Has no direct effect on actin depolymerization. Acts as a chaperone for ALOX5 (5LO), influencing both its stability and activity in leukotrienes synthesis (By similarity).</text>
</comment>
<comment type="subunit">
    <text evidence="1">Interacts with 5-lipoxygenase (ALOX5/5LO) in a calcium-independent manner. Binds to F-actin with a stoichiometry of 1:2 (By similarity).</text>
</comment>
<comment type="subcellular location">
    <subcellularLocation>
        <location evidence="3">Cytoplasm</location>
    </subcellularLocation>
    <subcellularLocation>
        <location evidence="3">Cytoplasm</location>
        <location evidence="3">Cytoskeleton</location>
    </subcellularLocation>
    <subcellularLocation>
        <location evidence="3">Nucleus</location>
    </subcellularLocation>
</comment>
<comment type="similarity">
    <text evidence="6">Belongs to the actin-binding proteins ADF family. Coactosin subfamily.</text>
</comment>
<protein>
    <recommendedName>
        <fullName>Coactosin-like protein</fullName>
    </recommendedName>
</protein>
<evidence type="ECO:0000250" key="1"/>
<evidence type="ECO:0000250" key="2">
    <source>
        <dbReference type="UniProtKB" id="B0BNA5"/>
    </source>
</evidence>
<evidence type="ECO:0000250" key="3">
    <source>
        <dbReference type="UniProtKB" id="Q14019"/>
    </source>
</evidence>
<evidence type="ECO:0000255" key="4">
    <source>
        <dbReference type="PROSITE-ProRule" id="PRU00599"/>
    </source>
</evidence>
<evidence type="ECO:0000269" key="5">
    <source>
    </source>
</evidence>
<evidence type="ECO:0000305" key="6"/>
<evidence type="ECO:0007829" key="7">
    <source>
        <dbReference type="PDB" id="1UDM"/>
    </source>
</evidence>
<evidence type="ECO:0007829" key="8">
    <source>
        <dbReference type="PDB" id="1WM4"/>
    </source>
</evidence>
<name>COTL1_MOUSE</name>
<dbReference type="EMBL" id="AK010052">
    <property type="protein sequence ID" value="BAB26668.1"/>
    <property type="molecule type" value="mRNA"/>
</dbReference>
<dbReference type="EMBL" id="AK007994">
    <property type="protein sequence ID" value="BAB25396.1"/>
    <property type="molecule type" value="mRNA"/>
</dbReference>
<dbReference type="EMBL" id="AK008085">
    <property type="protein sequence ID" value="BAB25450.1"/>
    <property type="molecule type" value="mRNA"/>
</dbReference>
<dbReference type="EMBL" id="BC011068">
    <property type="protein sequence ID" value="AAH11068.1"/>
    <property type="molecule type" value="mRNA"/>
</dbReference>
<dbReference type="EMBL" id="BC010249">
    <property type="protein sequence ID" value="AAH10249.1"/>
    <property type="molecule type" value="mRNA"/>
</dbReference>
<dbReference type="CCDS" id="CCDS22712.1"/>
<dbReference type="RefSeq" id="NP_082347.1">
    <property type="nucleotide sequence ID" value="NM_028071.3"/>
</dbReference>
<dbReference type="PDB" id="1UDM">
    <property type="method" value="NMR"/>
    <property type="chains" value="A=1-142"/>
</dbReference>
<dbReference type="PDB" id="1WM4">
    <property type="method" value="NMR"/>
    <property type="chains" value="A=1-142"/>
</dbReference>
<dbReference type="PDBsum" id="1UDM"/>
<dbReference type="PDBsum" id="1WM4"/>
<dbReference type="BMRB" id="Q9CQI6"/>
<dbReference type="SMR" id="Q9CQI6"/>
<dbReference type="BioGRID" id="215111">
    <property type="interactions" value="11"/>
</dbReference>
<dbReference type="FunCoup" id="Q9CQI6">
    <property type="interactions" value="911"/>
</dbReference>
<dbReference type="IntAct" id="Q9CQI6">
    <property type="interactions" value="1"/>
</dbReference>
<dbReference type="STRING" id="10090.ENSMUSP00000034285"/>
<dbReference type="GlyGen" id="Q9CQI6">
    <property type="glycosylation" value="1 site, 1 O-linked glycan (1 site)"/>
</dbReference>
<dbReference type="iPTMnet" id="Q9CQI6"/>
<dbReference type="PhosphoSitePlus" id="Q9CQI6"/>
<dbReference type="SwissPalm" id="Q9CQI6"/>
<dbReference type="CPTAC" id="non-CPTAC-3778"/>
<dbReference type="jPOST" id="Q9CQI6"/>
<dbReference type="PaxDb" id="10090-ENSMUSP00000034285"/>
<dbReference type="ProteomicsDB" id="277997"/>
<dbReference type="Pumba" id="Q9CQI6"/>
<dbReference type="TopDownProteomics" id="Q9CQI6"/>
<dbReference type="Antibodypedia" id="30596">
    <property type="antibodies" value="344 antibodies from 31 providers"/>
</dbReference>
<dbReference type="DNASU" id="72042"/>
<dbReference type="Ensembl" id="ENSMUST00000034285.14">
    <property type="protein sequence ID" value="ENSMUSP00000034285.7"/>
    <property type="gene ID" value="ENSMUSG00000031827.15"/>
</dbReference>
<dbReference type="GeneID" id="72042"/>
<dbReference type="KEGG" id="mmu:72042"/>
<dbReference type="UCSC" id="uc012glt.1">
    <property type="organism name" value="mouse"/>
</dbReference>
<dbReference type="AGR" id="MGI:1919292"/>
<dbReference type="CTD" id="23406"/>
<dbReference type="MGI" id="MGI:1919292">
    <property type="gene designation" value="Cotl1"/>
</dbReference>
<dbReference type="VEuPathDB" id="HostDB:ENSMUSG00000031827"/>
<dbReference type="eggNOG" id="KOG3655">
    <property type="taxonomic scope" value="Eukaryota"/>
</dbReference>
<dbReference type="GeneTree" id="ENSGT00390000012498"/>
<dbReference type="HOGENOM" id="CLU_129657_1_0_1"/>
<dbReference type="InParanoid" id="Q9CQI6"/>
<dbReference type="OMA" id="WIGPNCK"/>
<dbReference type="OrthoDB" id="20822at2759"/>
<dbReference type="PhylomeDB" id="Q9CQI6"/>
<dbReference type="TreeFam" id="TF324318"/>
<dbReference type="Reactome" id="R-MMU-6798695">
    <property type="pathway name" value="Neutrophil degranulation"/>
</dbReference>
<dbReference type="BioGRID-ORCS" id="72042">
    <property type="hits" value="1 hit in 78 CRISPR screens"/>
</dbReference>
<dbReference type="ChiTaRS" id="Cotl1">
    <property type="organism name" value="mouse"/>
</dbReference>
<dbReference type="EvolutionaryTrace" id="Q9CQI6"/>
<dbReference type="PRO" id="PR:Q9CQI6"/>
<dbReference type="Proteomes" id="UP000000589">
    <property type="component" value="Chromosome 8"/>
</dbReference>
<dbReference type="RNAct" id="Q9CQI6">
    <property type="molecule type" value="protein"/>
</dbReference>
<dbReference type="Bgee" id="ENSMUSG00000031827">
    <property type="expression patterns" value="Expressed in granulocyte and 260 other cell types or tissues"/>
</dbReference>
<dbReference type="ExpressionAtlas" id="Q9CQI6">
    <property type="expression patterns" value="baseline and differential"/>
</dbReference>
<dbReference type="GO" id="GO:0005856">
    <property type="term" value="C:cytoskeleton"/>
    <property type="evidence" value="ECO:0007669"/>
    <property type="project" value="UniProtKB-SubCell"/>
</dbReference>
<dbReference type="GO" id="GO:0005829">
    <property type="term" value="C:cytosol"/>
    <property type="evidence" value="ECO:0007669"/>
    <property type="project" value="Ensembl"/>
</dbReference>
<dbReference type="GO" id="GO:0005634">
    <property type="term" value="C:nucleus"/>
    <property type="evidence" value="ECO:0007669"/>
    <property type="project" value="UniProtKB-SubCell"/>
</dbReference>
<dbReference type="GO" id="GO:0003779">
    <property type="term" value="F:actin binding"/>
    <property type="evidence" value="ECO:0000314"/>
    <property type="project" value="MGI"/>
</dbReference>
<dbReference type="GO" id="GO:0019899">
    <property type="term" value="F:enzyme binding"/>
    <property type="evidence" value="ECO:0000353"/>
    <property type="project" value="UniProtKB"/>
</dbReference>
<dbReference type="GO" id="GO:0050832">
    <property type="term" value="P:defense response to fungus"/>
    <property type="evidence" value="ECO:0000314"/>
    <property type="project" value="UniProtKB"/>
</dbReference>
<dbReference type="CDD" id="cd11282">
    <property type="entry name" value="ADF_coactosin_like"/>
    <property type="match status" value="1"/>
</dbReference>
<dbReference type="FunFam" id="3.40.20.10:FF:000018">
    <property type="entry name" value="Coactosin-like 1"/>
    <property type="match status" value="1"/>
</dbReference>
<dbReference type="Gene3D" id="3.40.20.10">
    <property type="entry name" value="Severin"/>
    <property type="match status" value="1"/>
</dbReference>
<dbReference type="InterPro" id="IPR002108">
    <property type="entry name" value="ADF-H"/>
</dbReference>
<dbReference type="InterPro" id="IPR029006">
    <property type="entry name" value="ADF-H/Gelsolin-like_dom_sf"/>
</dbReference>
<dbReference type="PANTHER" id="PTHR10829:SF29">
    <property type="entry name" value="COACTOSIN-LIKE PROTEIN"/>
    <property type="match status" value="1"/>
</dbReference>
<dbReference type="PANTHER" id="PTHR10829">
    <property type="entry name" value="CORTACTIN AND DREBRIN"/>
    <property type="match status" value="1"/>
</dbReference>
<dbReference type="Pfam" id="PF00241">
    <property type="entry name" value="Cofilin_ADF"/>
    <property type="match status" value="1"/>
</dbReference>
<dbReference type="SMART" id="SM00102">
    <property type="entry name" value="ADF"/>
    <property type="match status" value="1"/>
</dbReference>
<dbReference type="SUPFAM" id="SSF55753">
    <property type="entry name" value="Actin depolymerizing proteins"/>
    <property type="match status" value="1"/>
</dbReference>
<dbReference type="PROSITE" id="PS51263">
    <property type="entry name" value="ADF_H"/>
    <property type="match status" value="1"/>
</dbReference>